<organism>
    <name type="scientific">Mus musculus</name>
    <name type="common">Mouse</name>
    <dbReference type="NCBI Taxonomy" id="10090"/>
    <lineage>
        <taxon>Eukaryota</taxon>
        <taxon>Metazoa</taxon>
        <taxon>Chordata</taxon>
        <taxon>Craniata</taxon>
        <taxon>Vertebrata</taxon>
        <taxon>Euteleostomi</taxon>
        <taxon>Mammalia</taxon>
        <taxon>Eutheria</taxon>
        <taxon>Euarchontoglires</taxon>
        <taxon>Glires</taxon>
        <taxon>Rodentia</taxon>
        <taxon>Myomorpha</taxon>
        <taxon>Muroidea</taxon>
        <taxon>Muridae</taxon>
        <taxon>Murinae</taxon>
        <taxon>Mus</taxon>
        <taxon>Mus</taxon>
    </lineage>
</organism>
<feature type="chain" id="PRO_0000156332" description="Biogenesis of lysosome-related organelles complex 1 subunit 1">
    <location>
        <begin position="1"/>
        <end position="125"/>
    </location>
</feature>
<feature type="coiled-coil region" evidence="2">
    <location>
        <begin position="1"/>
        <end position="31"/>
    </location>
</feature>
<feature type="sequence conflict" description="In Ref. 1; CAA74108." evidence="9" ref="1">
    <original>E</original>
    <variation>Y</variation>
    <location>
        <position position="26"/>
    </location>
</feature>
<feature type="sequence conflict" description="In Ref. 1; CAA74108." evidence="9" ref="1">
    <original>T</original>
    <variation>I</variation>
    <location>
        <position position="35"/>
    </location>
</feature>
<feature type="sequence conflict" description="In Ref. 1; CAA74108." evidence="9" ref="1">
    <original>D</original>
    <variation>V</variation>
    <location>
        <position position="40"/>
    </location>
</feature>
<sequence>MLSRLLKEHQAKQNERKELQEKRRREAIAAATCLTEALVDHLNVGVAQAYMNQRKLDHEVKTLQVQAAQFAKQTGQWIGMVENFNQALKEIGDVENWARSIELDMRTIATALEYVYKGQLQSAPS</sequence>
<proteinExistence type="evidence at protein level"/>
<evidence type="ECO:0000250" key="1">
    <source>
        <dbReference type="UniProtKB" id="P78537"/>
    </source>
</evidence>
<evidence type="ECO:0000255" key="2"/>
<evidence type="ECO:0000269" key="3">
    <source>
    </source>
</evidence>
<evidence type="ECO:0000269" key="4">
    <source>
    </source>
</evidence>
<evidence type="ECO:0000269" key="5">
    <source>
    </source>
</evidence>
<evidence type="ECO:0000269" key="6">
    <source>
    </source>
</evidence>
<evidence type="ECO:0000269" key="7">
    <source>
    </source>
</evidence>
<evidence type="ECO:0000269" key="8">
    <source>
    </source>
</evidence>
<evidence type="ECO:0000305" key="9"/>
<keyword id="KW-0175">Coiled coil</keyword>
<keyword id="KW-0963">Cytoplasm</keyword>
<keyword id="KW-0458">Lysosome</keyword>
<keyword id="KW-0472">Membrane</keyword>
<keyword id="KW-0496">Mitochondrion</keyword>
<keyword id="KW-1185">Reference proteome</keyword>
<keyword id="KW-0808">Transferase</keyword>
<accession>O55102</accession>
<accession>Q9DC96</accession>
<comment type="function">
    <text evidence="1 4 5 6">Component of the BLOC-1 complex, a complex that is required for normal biogenesis of lysosome-related organelles (LRO), such as platelet dense granules and melanosomes. In concert with the AP-3 complex, the BLOC-1 complex is required to target membrane protein cargos into vesicles assembled at cell bodies for delivery into neurites and nerve terminals. The BLOC-1 complex, in association with SNARE proteins, is also proposed to be involved in neurite extension (PubMed:16760431, PubMed:19546860, PubMed:21998198). As part of the BORC complex may play a role in lysosomes movement and localization at the cell periphery. The BORC complex is most probably associated with the cytosolic face of lysosomes, may recruit ARL8B and couple lysosomes to microtubule plus-end-directed kinesin motor (By similarity).</text>
</comment>
<comment type="function">
    <text evidence="1">Acts as a protein acetyltransferase. Negatively regulates aerobic respiration through mitochondrial protein lysine-acetylation. May counteract the action of the deacetylase SIRT3 by acetylating and regulating proteins of the mitochondrial respiratory chain including ATP5F1A and NDUFA9. Acts as a regulator of mTORC2 signaling in response to hypotoxic stress by mediating acetylation of RICTOR, thereby protecting RICTOR against ubiquitination and subsequent degradation by the proteasome.</text>
</comment>
<comment type="catalytic activity">
    <reaction evidence="1">
        <text>L-lysyl-[protein] + acetyl-CoA = N(6)-acetyl-L-lysyl-[protein] + CoA + H(+)</text>
        <dbReference type="Rhea" id="RHEA:45948"/>
        <dbReference type="Rhea" id="RHEA-COMP:9752"/>
        <dbReference type="Rhea" id="RHEA-COMP:10731"/>
        <dbReference type="ChEBI" id="CHEBI:15378"/>
        <dbReference type="ChEBI" id="CHEBI:29969"/>
        <dbReference type="ChEBI" id="CHEBI:57287"/>
        <dbReference type="ChEBI" id="CHEBI:57288"/>
        <dbReference type="ChEBI" id="CHEBI:61930"/>
    </reaction>
    <physiologicalReaction direction="left-to-right" evidence="1">
        <dbReference type="Rhea" id="RHEA:45949"/>
    </physiologicalReaction>
</comment>
<comment type="subunit">
    <text evidence="1 3 6 8">Component of the biogenesis of lysosome-related organelles complex 1 (BLOC-1) composed of BLOC1S1, BLOC1S2, BLOC1S3, BLOC1S4, BLOC1S5, BLOC1S6, DTNBP1/BLOC1S7 and SNAPIN/BLOC1S8. Octamer composed of one copy each BLOC1S1, BLOC1S2, BLOC1S3, BLOC1S4, BLOC1S5, BLOC1S6, DTNBP1/BLOC1S7 and SNAPIN/BLOC1S8 (PubMed:15102850). The BLOC-1 complex associates with the AP-3 protein complex and membrane protein cargos (PubMed:21998198). Interacts with ATP5F1A and NDUFA9; involved in their acetylation on lysine residues (By similarity). Interacts with KXD1 (PubMed:22554196).</text>
</comment>
<comment type="subcellular location">
    <subcellularLocation>
        <location evidence="7">Mitochondrion intermembrane space</location>
    </subcellularLocation>
    <subcellularLocation>
        <location evidence="7">Mitochondrion matrix</location>
    </subcellularLocation>
    <subcellularLocation>
        <location evidence="1">Cytoplasm</location>
        <location evidence="1">Cytosol</location>
    </subcellularLocation>
    <subcellularLocation>
        <location evidence="1">Lysosome membrane</location>
    </subcellularLocation>
</comment>
<comment type="similarity">
    <text evidence="9">Belongs to the BLOC1S1 family.</text>
</comment>
<reference key="1">
    <citation type="journal article" date="1997" name="Gene">
        <title>Cloning and structural analysis of the murine GCN5L1 gene.</title>
        <authorList>
            <person name="Driessen C.A.G.G."/>
            <person name="Winkens H.J."/>
            <person name="Kuhlmann L.D."/>
            <person name="Janssen B.P.M."/>
            <person name="van Vught A.H.M."/>
            <person name="Deutman A.F."/>
            <person name="Janssen J.J.M."/>
        </authorList>
    </citation>
    <scope>NUCLEOTIDE SEQUENCE [GENOMIC DNA]</scope>
    <source>
        <strain>129/SvJ</strain>
    </source>
</reference>
<reference key="2">
    <citation type="journal article" date="2005" name="Science">
        <title>The transcriptional landscape of the mammalian genome.</title>
        <authorList>
            <person name="Carninci P."/>
            <person name="Kasukawa T."/>
            <person name="Katayama S."/>
            <person name="Gough J."/>
            <person name="Frith M.C."/>
            <person name="Maeda N."/>
            <person name="Oyama R."/>
            <person name="Ravasi T."/>
            <person name="Lenhard B."/>
            <person name="Wells C."/>
            <person name="Kodzius R."/>
            <person name="Shimokawa K."/>
            <person name="Bajic V.B."/>
            <person name="Brenner S.E."/>
            <person name="Batalov S."/>
            <person name="Forrest A.R."/>
            <person name="Zavolan M."/>
            <person name="Davis M.J."/>
            <person name="Wilming L.G."/>
            <person name="Aidinis V."/>
            <person name="Allen J.E."/>
            <person name="Ambesi-Impiombato A."/>
            <person name="Apweiler R."/>
            <person name="Aturaliya R.N."/>
            <person name="Bailey T.L."/>
            <person name="Bansal M."/>
            <person name="Baxter L."/>
            <person name="Beisel K.W."/>
            <person name="Bersano T."/>
            <person name="Bono H."/>
            <person name="Chalk A.M."/>
            <person name="Chiu K.P."/>
            <person name="Choudhary V."/>
            <person name="Christoffels A."/>
            <person name="Clutterbuck D.R."/>
            <person name="Crowe M.L."/>
            <person name="Dalla E."/>
            <person name="Dalrymple B.P."/>
            <person name="de Bono B."/>
            <person name="Della Gatta G."/>
            <person name="di Bernardo D."/>
            <person name="Down T."/>
            <person name="Engstrom P."/>
            <person name="Fagiolini M."/>
            <person name="Faulkner G."/>
            <person name="Fletcher C.F."/>
            <person name="Fukushima T."/>
            <person name="Furuno M."/>
            <person name="Futaki S."/>
            <person name="Gariboldi M."/>
            <person name="Georgii-Hemming P."/>
            <person name="Gingeras T.R."/>
            <person name="Gojobori T."/>
            <person name="Green R.E."/>
            <person name="Gustincich S."/>
            <person name="Harbers M."/>
            <person name="Hayashi Y."/>
            <person name="Hensch T.K."/>
            <person name="Hirokawa N."/>
            <person name="Hill D."/>
            <person name="Huminiecki L."/>
            <person name="Iacono M."/>
            <person name="Ikeo K."/>
            <person name="Iwama A."/>
            <person name="Ishikawa T."/>
            <person name="Jakt M."/>
            <person name="Kanapin A."/>
            <person name="Katoh M."/>
            <person name="Kawasawa Y."/>
            <person name="Kelso J."/>
            <person name="Kitamura H."/>
            <person name="Kitano H."/>
            <person name="Kollias G."/>
            <person name="Krishnan S.P."/>
            <person name="Kruger A."/>
            <person name="Kummerfeld S.K."/>
            <person name="Kurochkin I.V."/>
            <person name="Lareau L.F."/>
            <person name="Lazarevic D."/>
            <person name="Lipovich L."/>
            <person name="Liu J."/>
            <person name="Liuni S."/>
            <person name="McWilliam S."/>
            <person name="Madan Babu M."/>
            <person name="Madera M."/>
            <person name="Marchionni L."/>
            <person name="Matsuda H."/>
            <person name="Matsuzawa S."/>
            <person name="Miki H."/>
            <person name="Mignone F."/>
            <person name="Miyake S."/>
            <person name="Morris K."/>
            <person name="Mottagui-Tabar S."/>
            <person name="Mulder N."/>
            <person name="Nakano N."/>
            <person name="Nakauchi H."/>
            <person name="Ng P."/>
            <person name="Nilsson R."/>
            <person name="Nishiguchi S."/>
            <person name="Nishikawa S."/>
            <person name="Nori F."/>
            <person name="Ohara O."/>
            <person name="Okazaki Y."/>
            <person name="Orlando V."/>
            <person name="Pang K.C."/>
            <person name="Pavan W.J."/>
            <person name="Pavesi G."/>
            <person name="Pesole G."/>
            <person name="Petrovsky N."/>
            <person name="Piazza S."/>
            <person name="Reed J."/>
            <person name="Reid J.F."/>
            <person name="Ring B.Z."/>
            <person name="Ringwald M."/>
            <person name="Rost B."/>
            <person name="Ruan Y."/>
            <person name="Salzberg S.L."/>
            <person name="Sandelin A."/>
            <person name="Schneider C."/>
            <person name="Schoenbach C."/>
            <person name="Sekiguchi K."/>
            <person name="Semple C.A."/>
            <person name="Seno S."/>
            <person name="Sessa L."/>
            <person name="Sheng Y."/>
            <person name="Shibata Y."/>
            <person name="Shimada H."/>
            <person name="Shimada K."/>
            <person name="Silva D."/>
            <person name="Sinclair B."/>
            <person name="Sperling S."/>
            <person name="Stupka E."/>
            <person name="Sugiura K."/>
            <person name="Sultana R."/>
            <person name="Takenaka Y."/>
            <person name="Taki K."/>
            <person name="Tammoja K."/>
            <person name="Tan S.L."/>
            <person name="Tang S."/>
            <person name="Taylor M.S."/>
            <person name="Tegner J."/>
            <person name="Teichmann S.A."/>
            <person name="Ueda H.R."/>
            <person name="van Nimwegen E."/>
            <person name="Verardo R."/>
            <person name="Wei C.L."/>
            <person name="Yagi K."/>
            <person name="Yamanishi H."/>
            <person name="Zabarovsky E."/>
            <person name="Zhu S."/>
            <person name="Zimmer A."/>
            <person name="Hide W."/>
            <person name="Bult C."/>
            <person name="Grimmond S.M."/>
            <person name="Teasdale R.D."/>
            <person name="Liu E.T."/>
            <person name="Brusic V."/>
            <person name="Quackenbush J."/>
            <person name="Wahlestedt C."/>
            <person name="Mattick J.S."/>
            <person name="Hume D.A."/>
            <person name="Kai C."/>
            <person name="Sasaki D."/>
            <person name="Tomaru Y."/>
            <person name="Fukuda S."/>
            <person name="Kanamori-Katayama M."/>
            <person name="Suzuki M."/>
            <person name="Aoki J."/>
            <person name="Arakawa T."/>
            <person name="Iida J."/>
            <person name="Imamura K."/>
            <person name="Itoh M."/>
            <person name="Kato T."/>
            <person name="Kawaji H."/>
            <person name="Kawagashira N."/>
            <person name="Kawashima T."/>
            <person name="Kojima M."/>
            <person name="Kondo S."/>
            <person name="Konno H."/>
            <person name="Nakano K."/>
            <person name="Ninomiya N."/>
            <person name="Nishio T."/>
            <person name="Okada M."/>
            <person name="Plessy C."/>
            <person name="Shibata K."/>
            <person name="Shiraki T."/>
            <person name="Suzuki S."/>
            <person name="Tagami M."/>
            <person name="Waki K."/>
            <person name="Watahiki A."/>
            <person name="Okamura-Oho Y."/>
            <person name="Suzuki H."/>
            <person name="Kawai J."/>
            <person name="Hayashizaki Y."/>
        </authorList>
    </citation>
    <scope>NUCLEOTIDE SEQUENCE [LARGE SCALE MRNA]</scope>
    <source>
        <strain>C57BL/6J</strain>
        <tissue>Brain</tissue>
    </source>
</reference>
<reference key="3">
    <citation type="journal article" date="2004" name="Genome Res.">
        <title>The status, quality, and expansion of the NIH full-length cDNA project: the Mammalian Gene Collection (MGC).</title>
        <authorList>
            <consortium name="The MGC Project Team"/>
        </authorList>
    </citation>
    <scope>NUCLEOTIDE SEQUENCE [LARGE SCALE MRNA]</scope>
    <source>
        <strain>C57BL/6J</strain>
        <tissue>Eye</tissue>
    </source>
</reference>
<reference key="4">
    <citation type="journal article" date="2004" name="J. Biol. Chem.">
        <title>Identification of snapin and three novel proteins (BLOS1, BLOS2, and BLOS3/reduced pigmentation) as subunits of biogenesis of lysosome-related organelles complex-1 (BLOC-1).</title>
        <authorList>
            <person name="Starcevic M."/>
            <person name="Dell'Angelica E.C."/>
        </authorList>
    </citation>
    <scope>IDENTIFICATION IN THE BLOC-1 COMPLEX</scope>
</reference>
<reference key="5">
    <citation type="journal article" date="2006" name="Mol. Biol. Cell">
        <title>BLOC-1 complex deficiency alters the targeting of adaptor protein complex-3 cargoes.</title>
        <authorList>
            <person name="Salazar G."/>
            <person name="Craige B."/>
            <person name="Styers M.L."/>
            <person name="Newell-Litwa K.A."/>
            <person name="Doucette M.M."/>
            <person name="Wainer B.H."/>
            <person name="Falcon-Perez J.M."/>
            <person name="Dell'Angelica E.C."/>
            <person name="Peden A.A."/>
            <person name="Werner E."/>
            <person name="Faundez V."/>
        </authorList>
    </citation>
    <scope>FUNCTION</scope>
</reference>
<reference key="6">
    <citation type="journal article" date="2010" name="Cell">
        <title>A tissue-specific atlas of mouse protein phosphorylation and expression.</title>
        <authorList>
            <person name="Huttlin E.L."/>
            <person name="Jedrychowski M.P."/>
            <person name="Elias J.E."/>
            <person name="Goswami T."/>
            <person name="Rad R."/>
            <person name="Beausoleil S.A."/>
            <person name="Villen J."/>
            <person name="Haas W."/>
            <person name="Sowa M.E."/>
            <person name="Gygi S.P."/>
        </authorList>
    </citation>
    <scope>IDENTIFICATION BY MASS SPECTROMETRY [LARGE SCALE ANALYSIS]</scope>
    <source>
        <tissue>Brain</tissue>
        <tissue>Kidney</tissue>
        <tissue>Liver</tissue>
        <tissue>Pancreas</tissue>
        <tissue>Testis</tissue>
    </source>
</reference>
<reference key="7">
    <citation type="journal article" date="2010" name="Mol. Psychiatry">
        <title>The dysbindin-containing complex (BLOC-1) in brain: developmental regulation, interaction with SNARE proteins and role in neurite outgrowth.</title>
        <authorList>
            <person name="Ghiani C.A."/>
            <person name="Starcevic M."/>
            <person name="Rodriguez-Fernandez I.A."/>
            <person name="Nazarian R."/>
            <person name="Cheli V.T."/>
            <person name="Chan L.N."/>
            <person name="Malvar J.S."/>
            <person name="de Vellis J."/>
            <person name="Sabatti C."/>
            <person name="Dell'Angelica E.C."/>
        </authorList>
    </citation>
    <scope>FUNCTION</scope>
</reference>
<reference key="8">
    <citation type="journal article" date="2011" name="Mol. Biol. Cell">
        <title>The schizophrenia susceptibility factor dysbindin and its associated complex sort cargoes from cell bodies to the synapse.</title>
        <authorList>
            <person name="Larimore J."/>
            <person name="Tornieri K."/>
            <person name="Ryder P.V."/>
            <person name="Gokhale A."/>
            <person name="Zlatic S.A."/>
            <person name="Craige B."/>
            <person name="Lee J.D."/>
            <person name="Talbot K."/>
            <person name="Pare J.F."/>
            <person name="Smith Y."/>
            <person name="Faundez V."/>
        </authorList>
    </citation>
    <scope>FUNCTION</scope>
    <scope>ASSOCIATION WITH THE AP-3 COMPLEX</scope>
</reference>
<reference key="9">
    <citation type="journal article" date="2012" name="Biochem. J.">
        <title>Identification of a molecular component of the mitochondrial acetyl transferase program; a novel role for GCN5L1.</title>
        <authorList>
            <person name="Scott I."/>
            <person name="Webster B.R."/>
            <person name="Li J.H."/>
            <person name="Sack M.N."/>
        </authorList>
    </citation>
    <scope>SUBCELLULAR LOCATION</scope>
</reference>
<reference key="10">
    <citation type="journal article" date="2012" name="Traffic">
        <title>The BLOS1-interacting protein KXD1 is involved in the biogenesis of lysosome-related organelles.</title>
        <authorList>
            <person name="Yang Q."/>
            <person name="He X."/>
            <person name="Yang L."/>
            <person name="Zhou Z."/>
            <person name="Cullinane A.R."/>
            <person name="Wei A."/>
            <person name="Zhang Z."/>
            <person name="Hao Z."/>
            <person name="Zhang A."/>
            <person name="He M."/>
            <person name="Feng Y."/>
            <person name="Gao X."/>
            <person name="Gahl W.A."/>
            <person name="Huizing M."/>
            <person name="Li W."/>
        </authorList>
    </citation>
    <scope>INTERACTION WITH KXD1</scope>
</reference>
<gene>
    <name type="primary">Bloc1s1</name>
    <name type="synonym">Gcn5l1</name>
</gene>
<name>BL1S1_MOUSE</name>
<dbReference type="EC" id="2.3.1.-" evidence="1"/>
<dbReference type="EMBL" id="Y13778">
    <property type="protein sequence ID" value="CAA74108.1"/>
    <property type="molecule type" value="Genomic_DNA"/>
</dbReference>
<dbReference type="EMBL" id="Y13779">
    <property type="protein sequence ID" value="CAA74108.1"/>
    <property type="status" value="JOINED"/>
    <property type="molecule type" value="Genomic_DNA"/>
</dbReference>
<dbReference type="EMBL" id="Y13780">
    <property type="protein sequence ID" value="CAA74108.1"/>
    <property type="status" value="JOINED"/>
    <property type="molecule type" value="Genomic_DNA"/>
</dbReference>
<dbReference type="EMBL" id="Y13781">
    <property type="protein sequence ID" value="CAA74108.1"/>
    <property type="status" value="JOINED"/>
    <property type="molecule type" value="Genomic_DNA"/>
</dbReference>
<dbReference type="EMBL" id="AK003035">
    <property type="protein sequence ID" value="BAB22523.1"/>
    <property type="molecule type" value="mRNA"/>
</dbReference>
<dbReference type="EMBL" id="BC034662">
    <property type="protein sequence ID" value="AAH34662.1"/>
    <property type="molecule type" value="mRNA"/>
</dbReference>
<dbReference type="CCDS" id="CCDS24299.1"/>
<dbReference type="PIR" id="JC6514">
    <property type="entry name" value="JC6514"/>
</dbReference>
<dbReference type="RefSeq" id="NP_056555.2">
    <property type="nucleotide sequence ID" value="NM_015740.3"/>
</dbReference>
<dbReference type="RefSeq" id="XP_006513292.1">
    <property type="nucleotide sequence ID" value="XM_006513229.3"/>
</dbReference>
<dbReference type="SMR" id="O55102"/>
<dbReference type="ComplexPortal" id="CPX-1913">
    <property type="entry name" value="BLOC-1 complex"/>
</dbReference>
<dbReference type="ComplexPortal" id="CPX-5061">
    <property type="entry name" value="BORC complex"/>
</dbReference>
<dbReference type="CORUM" id="O55102"/>
<dbReference type="FunCoup" id="O55102">
    <property type="interactions" value="934"/>
</dbReference>
<dbReference type="STRING" id="10090.ENSMUSP00000026405"/>
<dbReference type="iPTMnet" id="O55102"/>
<dbReference type="PhosphoSitePlus" id="O55102"/>
<dbReference type="PaxDb" id="10090-ENSMUSP00000026405"/>
<dbReference type="ProteomicsDB" id="273786"/>
<dbReference type="Pumba" id="O55102"/>
<dbReference type="DNASU" id="14533"/>
<dbReference type="Ensembl" id="ENSMUST00000026405.10">
    <property type="protein sequence ID" value="ENSMUSP00000026405.4"/>
    <property type="gene ID" value="ENSMUSG00000090247.8"/>
</dbReference>
<dbReference type="GeneID" id="14533"/>
<dbReference type="KEGG" id="mmu:14533"/>
<dbReference type="UCSC" id="uc007hoz.1">
    <property type="organism name" value="mouse"/>
</dbReference>
<dbReference type="AGR" id="MGI:1195276"/>
<dbReference type="CTD" id="2647"/>
<dbReference type="MGI" id="MGI:1195276">
    <property type="gene designation" value="Bloc1s1"/>
</dbReference>
<dbReference type="VEuPathDB" id="HostDB:ENSMUSG00000090247"/>
<dbReference type="eggNOG" id="KOG3390">
    <property type="taxonomic scope" value="Eukaryota"/>
</dbReference>
<dbReference type="GeneTree" id="ENSGT00390000002689"/>
<dbReference type="HOGENOM" id="CLU_115602_3_0_1"/>
<dbReference type="InParanoid" id="O55102"/>
<dbReference type="OMA" id="WMKIMEY"/>
<dbReference type="OrthoDB" id="73695at9989"/>
<dbReference type="PhylomeDB" id="O55102"/>
<dbReference type="TreeFam" id="TF314443"/>
<dbReference type="Reactome" id="R-MMU-432720">
    <property type="pathway name" value="Lysosome Vesicle Biogenesis"/>
</dbReference>
<dbReference type="Reactome" id="R-MMU-432722">
    <property type="pathway name" value="Golgi Associated Vesicle Biogenesis"/>
</dbReference>
<dbReference type="BioGRID-ORCS" id="14533">
    <property type="hits" value="10 hits in 79 CRISPR screens"/>
</dbReference>
<dbReference type="ChiTaRS" id="Bloc1s1">
    <property type="organism name" value="mouse"/>
</dbReference>
<dbReference type="PRO" id="PR:O55102"/>
<dbReference type="Proteomes" id="UP000000589">
    <property type="component" value="Chromosome 10"/>
</dbReference>
<dbReference type="RNAct" id="O55102">
    <property type="molecule type" value="protein"/>
</dbReference>
<dbReference type="Bgee" id="ENSMUSG00000090247">
    <property type="expression patterns" value="Expressed in white adipose tissue and 65 other cell types or tissues"/>
</dbReference>
<dbReference type="ExpressionAtlas" id="O55102">
    <property type="expression patterns" value="baseline and differential"/>
</dbReference>
<dbReference type="GO" id="GO:1904115">
    <property type="term" value="C:axon cytoplasm"/>
    <property type="evidence" value="ECO:0007669"/>
    <property type="project" value="GOC"/>
</dbReference>
<dbReference type="GO" id="GO:0031083">
    <property type="term" value="C:BLOC-1 complex"/>
    <property type="evidence" value="ECO:0000314"/>
    <property type="project" value="MGI"/>
</dbReference>
<dbReference type="GO" id="GO:0099078">
    <property type="term" value="C:BORC complex"/>
    <property type="evidence" value="ECO:0000266"/>
    <property type="project" value="ComplexPortal"/>
</dbReference>
<dbReference type="GO" id="GO:0098574">
    <property type="term" value="C:cytoplasmic side of lysosomal membrane"/>
    <property type="evidence" value="ECO:0000303"/>
    <property type="project" value="ComplexPortal"/>
</dbReference>
<dbReference type="GO" id="GO:0005829">
    <property type="term" value="C:cytosol"/>
    <property type="evidence" value="ECO:0000314"/>
    <property type="project" value="UniProtKB"/>
</dbReference>
<dbReference type="GO" id="GO:0005769">
    <property type="term" value="C:early endosome"/>
    <property type="evidence" value="ECO:0000314"/>
    <property type="project" value="CACAO"/>
</dbReference>
<dbReference type="GO" id="GO:0005758">
    <property type="term" value="C:mitochondrial intermembrane space"/>
    <property type="evidence" value="ECO:0000314"/>
    <property type="project" value="UniProtKB"/>
</dbReference>
<dbReference type="GO" id="GO:0005759">
    <property type="term" value="C:mitochondrial matrix"/>
    <property type="evidence" value="ECO:0000314"/>
    <property type="project" value="UniProtKB"/>
</dbReference>
<dbReference type="GO" id="GO:0005739">
    <property type="term" value="C:mitochondrion"/>
    <property type="evidence" value="ECO:0007005"/>
    <property type="project" value="MGI"/>
</dbReference>
<dbReference type="GO" id="GO:0061733">
    <property type="term" value="F:protein-lysine-acetyltransferase activity"/>
    <property type="evidence" value="ECO:0000250"/>
    <property type="project" value="UniProtKB"/>
</dbReference>
<dbReference type="GO" id="GO:0009060">
    <property type="term" value="P:aerobic respiration"/>
    <property type="evidence" value="ECO:0000250"/>
    <property type="project" value="UniProtKB"/>
</dbReference>
<dbReference type="GO" id="GO:0008089">
    <property type="term" value="P:anterograde axonal transport"/>
    <property type="evidence" value="ECO:0000315"/>
    <property type="project" value="UniProtKB"/>
</dbReference>
<dbReference type="GO" id="GO:0048490">
    <property type="term" value="P:anterograde synaptic vesicle transport"/>
    <property type="evidence" value="ECO:0000315"/>
    <property type="project" value="UniProtKB"/>
</dbReference>
<dbReference type="GO" id="GO:0032418">
    <property type="term" value="P:lysosome localization"/>
    <property type="evidence" value="ECO:0000250"/>
    <property type="project" value="UniProtKB"/>
</dbReference>
<dbReference type="GO" id="GO:0032438">
    <property type="term" value="P:melanosome organization"/>
    <property type="evidence" value="ECO:0000303"/>
    <property type="project" value="ComplexPortal"/>
</dbReference>
<dbReference type="GO" id="GO:0031175">
    <property type="term" value="P:neuron projection development"/>
    <property type="evidence" value="ECO:0000303"/>
    <property type="project" value="UniProtKB"/>
</dbReference>
<dbReference type="GO" id="GO:0072384">
    <property type="term" value="P:organelle transport along microtubule"/>
    <property type="evidence" value="ECO:0000303"/>
    <property type="project" value="ComplexPortal"/>
</dbReference>
<dbReference type="GO" id="GO:0018394">
    <property type="term" value="P:peptidyl-lysine acetylation"/>
    <property type="evidence" value="ECO:0000250"/>
    <property type="project" value="UniProtKB"/>
</dbReference>
<dbReference type="GO" id="GO:0051036">
    <property type="term" value="P:regulation of endosome size"/>
    <property type="evidence" value="ECO:0000303"/>
    <property type="project" value="ComplexPortal"/>
</dbReference>
<dbReference type="GO" id="GO:0062196">
    <property type="term" value="P:regulation of lysosome size"/>
    <property type="evidence" value="ECO:0000303"/>
    <property type="project" value="ComplexPortal"/>
</dbReference>
<dbReference type="InterPro" id="IPR009395">
    <property type="entry name" value="BLOC1S1"/>
</dbReference>
<dbReference type="PANTHER" id="PTHR13073:SF0">
    <property type="entry name" value="BIOGENESIS OF LYSOSOME-RELATED ORGANELLES COMPLEX 1 SUBUNIT 1"/>
    <property type="match status" value="1"/>
</dbReference>
<dbReference type="PANTHER" id="PTHR13073">
    <property type="entry name" value="BLOC-1 COMPLEX SUBUNIT 1"/>
    <property type="match status" value="1"/>
</dbReference>
<dbReference type="Pfam" id="PF06320">
    <property type="entry name" value="GCN5L1"/>
    <property type="match status" value="1"/>
</dbReference>
<protein>
    <recommendedName>
        <fullName>Biogenesis of lysosome-related organelles complex 1 subunit 1</fullName>
        <shortName>BLOC-1 subunit 1</shortName>
    </recommendedName>
    <alternativeName>
        <fullName>GCN5-like protein 1</fullName>
    </alternativeName>
    <alternativeName>
        <fullName evidence="9">Protein acetyltransferase BLOC1S1</fullName>
        <ecNumber evidence="1">2.3.1.-</ecNumber>
    </alternativeName>
</protein>